<feature type="chain" id="PRO_0000174292" description="Disks large-associated protein 2">
    <location>
        <begin position="1"/>
        <end position="1059"/>
    </location>
</feature>
<feature type="region of interest" description="Disordered" evidence="4">
    <location>
        <begin position="31"/>
        <end position="54"/>
    </location>
</feature>
<feature type="region of interest" description="Disordered" evidence="4">
    <location>
        <begin position="245"/>
        <end position="311"/>
    </location>
</feature>
<feature type="region of interest" description="Disordered" evidence="4">
    <location>
        <begin position="613"/>
        <end position="669"/>
    </location>
</feature>
<feature type="region of interest" description="Disordered" evidence="4">
    <location>
        <begin position="723"/>
        <end position="756"/>
    </location>
</feature>
<feature type="region of interest" description="Disordered" evidence="4">
    <location>
        <begin position="985"/>
        <end position="1025"/>
    </location>
</feature>
<feature type="compositionally biased region" description="Polar residues" evidence="4">
    <location>
        <begin position="245"/>
        <end position="261"/>
    </location>
</feature>
<feature type="compositionally biased region" description="Basic and acidic residues" evidence="4">
    <location>
        <begin position="262"/>
        <end position="271"/>
    </location>
</feature>
<feature type="compositionally biased region" description="Basic residues" evidence="4">
    <location>
        <begin position="272"/>
        <end position="285"/>
    </location>
</feature>
<feature type="compositionally biased region" description="Polar residues" evidence="4">
    <location>
        <begin position="632"/>
        <end position="645"/>
    </location>
</feature>
<feature type="compositionally biased region" description="Basic and acidic residues" evidence="4">
    <location>
        <begin position="747"/>
        <end position="756"/>
    </location>
</feature>
<feature type="compositionally biased region" description="Basic and acidic residues" evidence="4">
    <location>
        <begin position="1007"/>
        <end position="1025"/>
    </location>
</feature>
<feature type="modified residue" description="Phosphoserine" evidence="10">
    <location>
        <position position="302"/>
    </location>
</feature>
<feature type="modified residue" description="Phosphoserine" evidence="2">
    <location>
        <position position="308"/>
    </location>
</feature>
<feature type="modified residue" description="Phosphoserine" evidence="2">
    <location>
        <position position="390"/>
    </location>
</feature>
<feature type="modified residue" description="Phosphoserine" evidence="10">
    <location>
        <position position="456"/>
    </location>
</feature>
<feature type="modified residue" description="Phosphoserine" evidence="10">
    <location>
        <position position="667"/>
    </location>
</feature>
<feature type="modified residue" description="Phosphoserine" evidence="10">
    <location>
        <position position="670"/>
    </location>
</feature>
<feature type="modified residue" description="Phosphoserine" evidence="10">
    <location>
        <position position="673"/>
    </location>
</feature>
<feature type="modified residue" description="Phosphoserine" evidence="10">
    <location>
        <position position="720"/>
    </location>
</feature>
<feature type="modified residue" description="Phosphothreonine" evidence="10">
    <location>
        <position position="743"/>
    </location>
</feature>
<feature type="modified residue" description="Phosphoserine" evidence="10">
    <location>
        <position position="745"/>
    </location>
</feature>
<feature type="modified residue" description="Phosphoserine" evidence="10">
    <location>
        <position position="776"/>
    </location>
</feature>
<feature type="modified residue" description="Phosphoserine" evidence="10">
    <location>
        <position position="811"/>
    </location>
</feature>
<feature type="modified residue" description="Phosphoserine" evidence="2">
    <location>
        <position position="983"/>
    </location>
</feature>
<feature type="modified residue" description="Phosphoserine" evidence="9">
    <location>
        <position position="1012"/>
    </location>
</feature>
<feature type="splice variant" id="VSP_014817" description="In isoform 2." evidence="6">
    <location>
        <begin position="725"/>
        <end position="738"/>
    </location>
</feature>
<feature type="sequence conflict" description="In Ref. 1; BAC27927." evidence="7" ref="1">
    <original>K</original>
    <variation>R</variation>
    <location>
        <position position="472"/>
    </location>
</feature>
<feature type="sequence conflict" description="In Ref. 1; BAC27927." evidence="7" ref="1">
    <original>D</original>
    <variation>G</variation>
    <location>
        <position position="647"/>
    </location>
</feature>
<proteinExistence type="evidence at protein level"/>
<dbReference type="EMBL" id="AK032564">
    <property type="protein sequence ID" value="BAC27927.1"/>
    <property type="molecule type" value="mRNA"/>
</dbReference>
<dbReference type="EMBL" id="AY243847">
    <property type="protein sequence ID" value="AAO89218.3"/>
    <property type="molecule type" value="mRNA"/>
</dbReference>
<dbReference type="CCDS" id="CCDS52492.1">
    <molecule id="Q8BJ42-1"/>
</dbReference>
<dbReference type="RefSeq" id="NP_001139437.1">
    <property type="nucleotide sequence ID" value="NM_001145965.1"/>
</dbReference>
<dbReference type="RefSeq" id="NP_766498.2">
    <molecule id="Q8BJ42-1"/>
    <property type="nucleotide sequence ID" value="NM_172910.3"/>
</dbReference>
<dbReference type="RefSeq" id="XP_017168275.1">
    <property type="nucleotide sequence ID" value="XM_017312786.1"/>
</dbReference>
<dbReference type="RefSeq" id="XP_036009910.1">
    <molecule id="Q8BJ42-2"/>
    <property type="nucleotide sequence ID" value="XM_036154017.1"/>
</dbReference>
<dbReference type="SMR" id="Q8BJ42"/>
<dbReference type="BioGRID" id="232634">
    <property type="interactions" value="17"/>
</dbReference>
<dbReference type="FunCoup" id="Q8BJ42">
    <property type="interactions" value="213"/>
</dbReference>
<dbReference type="IntAct" id="Q8BJ42">
    <property type="interactions" value="6"/>
</dbReference>
<dbReference type="MINT" id="Q8BJ42"/>
<dbReference type="STRING" id="10090.ENSMUSP00000123078"/>
<dbReference type="GlyGen" id="Q8BJ42">
    <property type="glycosylation" value="5 sites, 1 N-linked glycan (1 site), 1 O-linked glycan (4 sites)"/>
</dbReference>
<dbReference type="iPTMnet" id="Q8BJ42"/>
<dbReference type="MetOSite" id="Q8BJ42"/>
<dbReference type="PhosphoSitePlus" id="Q8BJ42"/>
<dbReference type="SwissPalm" id="Q8BJ42"/>
<dbReference type="PaxDb" id="10090-ENSMUSP00000123078"/>
<dbReference type="PeptideAtlas" id="Q8BJ42"/>
<dbReference type="ProteomicsDB" id="277462">
    <molecule id="Q8BJ42-1"/>
</dbReference>
<dbReference type="ProteomicsDB" id="277463">
    <molecule id="Q8BJ42-2"/>
</dbReference>
<dbReference type="ABCD" id="Q8BJ42">
    <property type="antibodies" value="1 sequenced antibody"/>
</dbReference>
<dbReference type="Antibodypedia" id="21955">
    <property type="antibodies" value="81 antibodies from 26 providers"/>
</dbReference>
<dbReference type="DNASU" id="244310"/>
<dbReference type="Ensembl" id="ENSMUST00000043279.9">
    <molecule id="Q8BJ42-1"/>
    <property type="protein sequence ID" value="ENSMUSP00000039647.9"/>
    <property type="gene ID" value="ENSMUSG00000047495.16"/>
</dbReference>
<dbReference type="Ensembl" id="ENSMUST00000133298.8">
    <molecule id="Q8BJ42-1"/>
    <property type="protein sequence ID" value="ENSMUSP00000119613.2"/>
    <property type="gene ID" value="ENSMUSG00000047495.16"/>
</dbReference>
<dbReference type="Ensembl" id="ENSMUST00000150247.8">
    <molecule id="Q8BJ42-2"/>
    <property type="protein sequence ID" value="ENSMUSP00000123104.2"/>
    <property type="gene ID" value="ENSMUSG00000047495.16"/>
</dbReference>
<dbReference type="GeneID" id="244310"/>
<dbReference type="KEGG" id="mmu:244310"/>
<dbReference type="UCSC" id="uc009kyy.2">
    <molecule id="Q8BJ42-1"/>
    <property type="organism name" value="mouse"/>
</dbReference>
<dbReference type="UCSC" id="uc009kza.2">
    <molecule id="Q8BJ42-2"/>
    <property type="organism name" value="mouse"/>
</dbReference>
<dbReference type="AGR" id="MGI:2443181"/>
<dbReference type="CTD" id="9228"/>
<dbReference type="MGI" id="MGI:2443181">
    <property type="gene designation" value="Dlgap2"/>
</dbReference>
<dbReference type="VEuPathDB" id="HostDB:ENSMUSG00000047495"/>
<dbReference type="eggNOG" id="KOG3971">
    <property type="taxonomic scope" value="Eukaryota"/>
</dbReference>
<dbReference type="GeneTree" id="ENSGT00940000157913"/>
<dbReference type="HOGENOM" id="CLU_010880_0_0_1"/>
<dbReference type="InParanoid" id="Q8BJ42"/>
<dbReference type="OrthoDB" id="10036956at2759"/>
<dbReference type="PhylomeDB" id="Q8BJ42"/>
<dbReference type="Reactome" id="R-MMU-6794361">
    <property type="pathway name" value="Neurexins and neuroligins"/>
</dbReference>
<dbReference type="BioGRID-ORCS" id="244310">
    <property type="hits" value="1 hit in 77 CRISPR screens"/>
</dbReference>
<dbReference type="CD-CODE" id="CE726F99">
    <property type="entry name" value="Postsynaptic density"/>
</dbReference>
<dbReference type="ChiTaRS" id="Dlgap2">
    <property type="organism name" value="mouse"/>
</dbReference>
<dbReference type="PRO" id="PR:Q8BJ42"/>
<dbReference type="Proteomes" id="UP000000589">
    <property type="component" value="Chromosome 8"/>
</dbReference>
<dbReference type="RNAct" id="Q8BJ42">
    <property type="molecule type" value="protein"/>
</dbReference>
<dbReference type="Bgee" id="ENSMUSG00000047495">
    <property type="expression patterns" value="Expressed in lumbar subsegment of spinal cord and 78 other cell types or tissues"/>
</dbReference>
<dbReference type="ExpressionAtlas" id="Q8BJ42">
    <property type="expression patterns" value="baseline and differential"/>
</dbReference>
<dbReference type="GO" id="GO:0098978">
    <property type="term" value="C:glutamatergic synapse"/>
    <property type="evidence" value="ECO:0000314"/>
    <property type="project" value="SynGO"/>
</dbReference>
<dbReference type="GO" id="GO:0005886">
    <property type="term" value="C:plasma membrane"/>
    <property type="evidence" value="ECO:0007669"/>
    <property type="project" value="UniProtKB-SubCell"/>
</dbReference>
<dbReference type="GO" id="GO:0099092">
    <property type="term" value="C:postsynaptic density, intracellular component"/>
    <property type="evidence" value="ECO:0000314"/>
    <property type="project" value="SynGO"/>
</dbReference>
<dbReference type="GO" id="GO:0050804">
    <property type="term" value="P:modulation of chemical synaptic transmission"/>
    <property type="evidence" value="ECO:0000314"/>
    <property type="project" value="SynGO"/>
</dbReference>
<dbReference type="GO" id="GO:0023052">
    <property type="term" value="P:signaling"/>
    <property type="evidence" value="ECO:0007669"/>
    <property type="project" value="InterPro"/>
</dbReference>
<dbReference type="InterPro" id="IPR005026">
    <property type="entry name" value="SAPAP"/>
</dbReference>
<dbReference type="PANTHER" id="PTHR12353:SF3">
    <property type="entry name" value="DISKS LARGE-ASSOCIATED PROTEIN 2"/>
    <property type="match status" value="1"/>
</dbReference>
<dbReference type="PANTHER" id="PTHR12353">
    <property type="entry name" value="DISKS LARGE-ASSOCIATED PROTEIN DAP SAP90/PSD-95-ASSOCIATED PROTEIN"/>
    <property type="match status" value="1"/>
</dbReference>
<dbReference type="Pfam" id="PF03359">
    <property type="entry name" value="GKAP"/>
    <property type="match status" value="1"/>
</dbReference>
<accession>Q8BJ42</accession>
<accession>Q6XBF3</accession>
<keyword id="KW-0025">Alternative splicing</keyword>
<keyword id="KW-1003">Cell membrane</keyword>
<keyword id="KW-0472">Membrane</keyword>
<keyword id="KW-0597">Phosphoprotein</keyword>
<keyword id="KW-1185">Reference proteome</keyword>
<keyword id="KW-0770">Synapse</keyword>
<organism>
    <name type="scientific">Mus musculus</name>
    <name type="common">Mouse</name>
    <dbReference type="NCBI Taxonomy" id="10090"/>
    <lineage>
        <taxon>Eukaryota</taxon>
        <taxon>Metazoa</taxon>
        <taxon>Chordata</taxon>
        <taxon>Craniata</taxon>
        <taxon>Vertebrata</taxon>
        <taxon>Euteleostomi</taxon>
        <taxon>Mammalia</taxon>
        <taxon>Eutheria</taxon>
        <taxon>Euarchontoglires</taxon>
        <taxon>Glires</taxon>
        <taxon>Rodentia</taxon>
        <taxon>Myomorpha</taxon>
        <taxon>Muroidea</taxon>
        <taxon>Muridae</taxon>
        <taxon>Murinae</taxon>
        <taxon>Mus</taxon>
        <taxon>Mus</taxon>
    </lineage>
</organism>
<evidence type="ECO:0000250" key="1"/>
<evidence type="ECO:0000250" key="2">
    <source>
        <dbReference type="UniProtKB" id="P97837"/>
    </source>
</evidence>
<evidence type="ECO:0000250" key="3">
    <source>
        <dbReference type="UniProtKB" id="Q9P1A6"/>
    </source>
</evidence>
<evidence type="ECO:0000256" key="4">
    <source>
        <dbReference type="SAM" id="MobiDB-lite"/>
    </source>
</evidence>
<evidence type="ECO:0000269" key="5">
    <source>
    </source>
</evidence>
<evidence type="ECO:0000303" key="6">
    <source>
    </source>
</evidence>
<evidence type="ECO:0000305" key="7"/>
<evidence type="ECO:0000312" key="8">
    <source>
        <dbReference type="MGI" id="MGI:2443181"/>
    </source>
</evidence>
<evidence type="ECO:0007744" key="9">
    <source>
    </source>
</evidence>
<evidence type="ECO:0007744" key="10">
    <source>
    </source>
</evidence>
<sequence length="1059" mass="119074">MGTAQVLPGILQKHCCILPDRNTESQCTLCGEPEEEEGGDLAQPGLSFPGPAEEDIDQQYSWSPTQHFNEERYSPAPRNMKGLTGSRNQPQLCAGHTCGLSPPDDCEHPHDHMHHGSDVRQPYLLSPAESCPMDHHRCSPRSSVHSECMMMPVMLGDHVSSSTFPRMHYSSHYDTRDDCAMSHTSTKVNRIPANLLDQFEKQLPLHRDGFHTLQYQRASAATEQRNESPGRIRHLVHSVQKLFTKSHSLEGSSKSNINGTKSDSRVDDHHQSHLSKHSKRSKSKERKPESKHKSGMSSWWSSDDNLDSDSTYRTPSVAHRHHMDHIPHCYPEALQSPFGDLSLKTSKSNNDVKCSACEGLALTPDTRYMKRSSWSTLTVSQAKEAYRKSSLNLDKPLVHPEIKPSLRPCHYLQVPQDDWGAYPTGGKEEEIPCRRMRSGSYIKAMGDEESGESDSSPKTSPTVAIRPEPLLKPIIQRPLGDHQTQSYLQAATEVPVGHSLNPSINYNSPKFRSRNQSYMRAVSTLSQASCVSQMSEAEVNGQFESVCESVFSEVESQAMDALDLPGCFRTRSHSYLRAIQAGYSQDDECIPVMTSSNMTSTIRSTAAVSYTNYKKTPPPVPPRTTSKPLISVTAQSSTESTQDAYQDSRAQRMSPWPQDSRGGLYNSMDSLDSNKAMNLALETAAAQRHAADTQSSSTRSIDKAVLASKAEELLKSRCSSIGVQDSEFPDHQPYPRSDVETATDSDTESRGLREYHSVGVQVEDEKRHGRFKRSNSVTAAVQADLELEGFPGHVSMEDKGLQFGSSFQRHSEPSTPTQYGALRTVRTQGLFSYREDYRTQVDTSTLPPPDPWLEPSLDTVETGRMSPCRRDGSWFLKLLHTETKRMEGWCKEMEREAEENDLLEDILGKIRSAVGSAQLLMSQKFQQFYWLCQQNMDPSAMPRPTSQDLAGYWDMLQLSVEDVSMKFDELHQLKLNDWKIIESPERKEERKIPPPIPKKPPKGKFPITREKSLDLPDRQRQEARRRLMAAKRAASFRQNSATERADSIEIYIPEAQTRL</sequence>
<protein>
    <recommendedName>
        <fullName evidence="3">Disks large-associated protein 2</fullName>
        <shortName>DAP-2</shortName>
    </recommendedName>
    <alternativeName>
        <fullName>PSD-95/SAP90-binding protein 2</fullName>
    </alternativeName>
    <alternativeName>
        <fullName>SAP90/PSD-95-associated protein 2</fullName>
        <shortName>SAPAP2</shortName>
    </alternativeName>
</protein>
<reference key="1">
    <citation type="journal article" date="2005" name="Science">
        <title>The transcriptional landscape of the mammalian genome.</title>
        <authorList>
            <person name="Carninci P."/>
            <person name="Kasukawa T."/>
            <person name="Katayama S."/>
            <person name="Gough J."/>
            <person name="Frith M.C."/>
            <person name="Maeda N."/>
            <person name="Oyama R."/>
            <person name="Ravasi T."/>
            <person name="Lenhard B."/>
            <person name="Wells C."/>
            <person name="Kodzius R."/>
            <person name="Shimokawa K."/>
            <person name="Bajic V.B."/>
            <person name="Brenner S.E."/>
            <person name="Batalov S."/>
            <person name="Forrest A.R."/>
            <person name="Zavolan M."/>
            <person name="Davis M.J."/>
            <person name="Wilming L.G."/>
            <person name="Aidinis V."/>
            <person name="Allen J.E."/>
            <person name="Ambesi-Impiombato A."/>
            <person name="Apweiler R."/>
            <person name="Aturaliya R.N."/>
            <person name="Bailey T.L."/>
            <person name="Bansal M."/>
            <person name="Baxter L."/>
            <person name="Beisel K.W."/>
            <person name="Bersano T."/>
            <person name="Bono H."/>
            <person name="Chalk A.M."/>
            <person name="Chiu K.P."/>
            <person name="Choudhary V."/>
            <person name="Christoffels A."/>
            <person name="Clutterbuck D.R."/>
            <person name="Crowe M.L."/>
            <person name="Dalla E."/>
            <person name="Dalrymple B.P."/>
            <person name="de Bono B."/>
            <person name="Della Gatta G."/>
            <person name="di Bernardo D."/>
            <person name="Down T."/>
            <person name="Engstrom P."/>
            <person name="Fagiolini M."/>
            <person name="Faulkner G."/>
            <person name="Fletcher C.F."/>
            <person name="Fukushima T."/>
            <person name="Furuno M."/>
            <person name="Futaki S."/>
            <person name="Gariboldi M."/>
            <person name="Georgii-Hemming P."/>
            <person name="Gingeras T.R."/>
            <person name="Gojobori T."/>
            <person name="Green R.E."/>
            <person name="Gustincich S."/>
            <person name="Harbers M."/>
            <person name="Hayashi Y."/>
            <person name="Hensch T.K."/>
            <person name="Hirokawa N."/>
            <person name="Hill D."/>
            <person name="Huminiecki L."/>
            <person name="Iacono M."/>
            <person name="Ikeo K."/>
            <person name="Iwama A."/>
            <person name="Ishikawa T."/>
            <person name="Jakt M."/>
            <person name="Kanapin A."/>
            <person name="Katoh M."/>
            <person name="Kawasawa Y."/>
            <person name="Kelso J."/>
            <person name="Kitamura H."/>
            <person name="Kitano H."/>
            <person name="Kollias G."/>
            <person name="Krishnan S.P."/>
            <person name="Kruger A."/>
            <person name="Kummerfeld S.K."/>
            <person name="Kurochkin I.V."/>
            <person name="Lareau L.F."/>
            <person name="Lazarevic D."/>
            <person name="Lipovich L."/>
            <person name="Liu J."/>
            <person name="Liuni S."/>
            <person name="McWilliam S."/>
            <person name="Madan Babu M."/>
            <person name="Madera M."/>
            <person name="Marchionni L."/>
            <person name="Matsuda H."/>
            <person name="Matsuzawa S."/>
            <person name="Miki H."/>
            <person name="Mignone F."/>
            <person name="Miyake S."/>
            <person name="Morris K."/>
            <person name="Mottagui-Tabar S."/>
            <person name="Mulder N."/>
            <person name="Nakano N."/>
            <person name="Nakauchi H."/>
            <person name="Ng P."/>
            <person name="Nilsson R."/>
            <person name="Nishiguchi S."/>
            <person name="Nishikawa S."/>
            <person name="Nori F."/>
            <person name="Ohara O."/>
            <person name="Okazaki Y."/>
            <person name="Orlando V."/>
            <person name="Pang K.C."/>
            <person name="Pavan W.J."/>
            <person name="Pavesi G."/>
            <person name="Pesole G."/>
            <person name="Petrovsky N."/>
            <person name="Piazza S."/>
            <person name="Reed J."/>
            <person name="Reid J.F."/>
            <person name="Ring B.Z."/>
            <person name="Ringwald M."/>
            <person name="Rost B."/>
            <person name="Ruan Y."/>
            <person name="Salzberg S.L."/>
            <person name="Sandelin A."/>
            <person name="Schneider C."/>
            <person name="Schoenbach C."/>
            <person name="Sekiguchi K."/>
            <person name="Semple C.A."/>
            <person name="Seno S."/>
            <person name="Sessa L."/>
            <person name="Sheng Y."/>
            <person name="Shibata Y."/>
            <person name="Shimada H."/>
            <person name="Shimada K."/>
            <person name="Silva D."/>
            <person name="Sinclair B."/>
            <person name="Sperling S."/>
            <person name="Stupka E."/>
            <person name="Sugiura K."/>
            <person name="Sultana R."/>
            <person name="Takenaka Y."/>
            <person name="Taki K."/>
            <person name="Tammoja K."/>
            <person name="Tan S.L."/>
            <person name="Tang S."/>
            <person name="Taylor M.S."/>
            <person name="Tegner J."/>
            <person name="Teichmann S.A."/>
            <person name="Ueda H.R."/>
            <person name="van Nimwegen E."/>
            <person name="Verardo R."/>
            <person name="Wei C.L."/>
            <person name="Yagi K."/>
            <person name="Yamanishi H."/>
            <person name="Zabarovsky E."/>
            <person name="Zhu S."/>
            <person name="Zimmer A."/>
            <person name="Hide W."/>
            <person name="Bult C."/>
            <person name="Grimmond S.M."/>
            <person name="Teasdale R.D."/>
            <person name="Liu E.T."/>
            <person name="Brusic V."/>
            <person name="Quackenbush J."/>
            <person name="Wahlestedt C."/>
            <person name="Mattick J.S."/>
            <person name="Hume D.A."/>
            <person name="Kai C."/>
            <person name="Sasaki D."/>
            <person name="Tomaru Y."/>
            <person name="Fukuda S."/>
            <person name="Kanamori-Katayama M."/>
            <person name="Suzuki M."/>
            <person name="Aoki J."/>
            <person name="Arakawa T."/>
            <person name="Iida J."/>
            <person name="Imamura K."/>
            <person name="Itoh M."/>
            <person name="Kato T."/>
            <person name="Kawaji H."/>
            <person name="Kawagashira N."/>
            <person name="Kawashima T."/>
            <person name="Kojima M."/>
            <person name="Kondo S."/>
            <person name="Konno H."/>
            <person name="Nakano K."/>
            <person name="Ninomiya N."/>
            <person name="Nishio T."/>
            <person name="Okada M."/>
            <person name="Plessy C."/>
            <person name="Shibata K."/>
            <person name="Shiraki T."/>
            <person name="Suzuki S."/>
            <person name="Tagami M."/>
            <person name="Waki K."/>
            <person name="Watahiki A."/>
            <person name="Okamura-Oho Y."/>
            <person name="Suzuki H."/>
            <person name="Kawai J."/>
            <person name="Hayashizaki Y."/>
        </authorList>
    </citation>
    <scope>NUCLEOTIDE SEQUENCE [LARGE SCALE MRNA] (ISOFORM 1)</scope>
    <source>
        <strain>C57BL/6J</strain>
        <tissue>Olfactory bulb</tissue>
    </source>
</reference>
<reference key="2">
    <citation type="journal article" date="2004" name="J. Comp. Neurol.">
        <title>Differential mRNA expression and protein localization of the SAP90/PSD-95-associated proteins (SAPAPs) in the nervous system of the mouse.</title>
        <authorList>
            <person name="Welch J.M."/>
            <person name="Wang D."/>
            <person name="Feng G."/>
        </authorList>
    </citation>
    <scope>NUCLEOTIDE SEQUENCE [MRNA] OF 80-1059 (ISOFORM 2)</scope>
    <scope>TISSUE SPECIFICITY</scope>
    <source>
        <strain>ICR</strain>
    </source>
</reference>
<reference key="3">
    <citation type="journal article" date="2006" name="Mol. Cell. Proteomics">
        <title>Comprehensive identification of phosphorylation sites in postsynaptic density preparations.</title>
        <authorList>
            <person name="Trinidad J.C."/>
            <person name="Specht C.G."/>
            <person name="Thalhammer A."/>
            <person name="Schoepfer R."/>
            <person name="Burlingame A.L."/>
        </authorList>
    </citation>
    <scope>PHOSPHORYLATION [LARGE SCALE ANALYSIS] AT SER-1012</scope>
    <scope>IDENTIFICATION BY MASS SPECTROMETRY [LARGE SCALE ANALYSIS]</scope>
    <source>
        <tissue>Brain</tissue>
    </source>
</reference>
<reference key="4">
    <citation type="journal article" date="2010" name="Cell">
        <title>A tissue-specific atlas of mouse protein phosphorylation and expression.</title>
        <authorList>
            <person name="Huttlin E.L."/>
            <person name="Jedrychowski M.P."/>
            <person name="Elias J.E."/>
            <person name="Goswami T."/>
            <person name="Rad R."/>
            <person name="Beausoleil S.A."/>
            <person name="Villen J."/>
            <person name="Haas W."/>
            <person name="Sowa M.E."/>
            <person name="Gygi S.P."/>
        </authorList>
    </citation>
    <scope>PHOSPHORYLATION [LARGE SCALE ANALYSIS] AT SER-302; SER-456; SER-667; SER-670; SER-673; SER-720; THR-743; SER-745; SER-776 AND SER-811</scope>
    <scope>IDENTIFICATION BY MASS SPECTROMETRY [LARGE SCALE ANALYSIS]</scope>
    <source>
        <tissue>Brain</tissue>
    </source>
</reference>
<comment type="function">
    <text>May play a role in the molecular organization of synapses and neuronal cell signaling. Could be an adapter protein linking ion channel to the subsynaptic cytoskeleton. May induce enrichment of PSD-95/SAP90 at the plasma membrane.</text>
</comment>
<comment type="subunit">
    <text evidence="1">Interacts with DLG4/PSD-95.</text>
</comment>
<comment type="subcellular location">
    <subcellularLocation>
        <location evidence="1">Cell membrane</location>
        <topology evidence="1">Peripheral membrane protein</topology>
    </subcellularLocation>
    <subcellularLocation>
        <location evidence="1">Postsynaptic density</location>
    </subcellularLocation>
    <subcellularLocation>
        <location evidence="1">Synapse</location>
    </subcellularLocation>
    <text evidence="1">Postsynaptic density of neuronal cells.</text>
</comment>
<comment type="alternative products">
    <event type="alternative splicing"/>
    <isoform>
        <id>Q8BJ42-1</id>
        <name>1</name>
        <sequence type="displayed"/>
    </isoform>
    <isoform>
        <id>Q8BJ42-2</id>
        <name>2</name>
        <sequence type="described" ref="VSP_014817"/>
    </isoform>
</comment>
<comment type="tissue specificity">
    <text evidence="5">Expressed in various brain areas.</text>
</comment>
<comment type="similarity">
    <text evidence="7">Belongs to the SAPAP family.</text>
</comment>
<gene>
    <name evidence="8" type="primary">Dlgap2</name>
    <name type="synonym">Dap2</name>
</gene>
<name>DLGP2_MOUSE</name>